<evidence type="ECO:0000250" key="1"/>
<evidence type="ECO:0000255" key="2"/>
<evidence type="ECO:0000305" key="3"/>
<protein>
    <recommendedName>
        <fullName evidence="3">Neurotrophic factor BDNF precursor form</fullName>
        <shortName>proBDNF</shortName>
    </recommendedName>
    <alternativeName>
        <fullName>Brain-derived neurotrophic factor</fullName>
    </alternativeName>
    <component>
        <recommendedName>
            <fullName>Neurotrophic factor BDNF</fullName>
        </recommendedName>
    </component>
</protein>
<comment type="function">
    <text evidence="1">Promotes the survival of neuronal populations that are all located either in the central nervous system or directly connected to it.</text>
</comment>
<comment type="subcellular location">
    <subcellularLocation>
        <location evidence="1">Secreted</location>
    </subcellularLocation>
</comment>
<comment type="similarity">
    <text evidence="3">Belongs to the NGF-beta family.</text>
</comment>
<organism>
    <name type="scientific">Ptyas major</name>
    <name type="common">Chinese green snake</name>
    <name type="synonym">Cyclophiops major</name>
    <dbReference type="NCBI Taxonomy" id="192173"/>
    <lineage>
        <taxon>Eukaryota</taxon>
        <taxon>Metazoa</taxon>
        <taxon>Chordata</taxon>
        <taxon>Craniata</taxon>
        <taxon>Vertebrata</taxon>
        <taxon>Euteleostomi</taxon>
        <taxon>Lepidosauria</taxon>
        <taxon>Squamata</taxon>
        <taxon>Bifurcata</taxon>
        <taxon>Unidentata</taxon>
        <taxon>Episquamata</taxon>
        <taxon>Toxicofera</taxon>
        <taxon>Serpentes</taxon>
        <taxon>Colubroidea</taxon>
        <taxon>Colubridae</taxon>
        <taxon>Colubrinae</taxon>
        <taxon>Ptyas</taxon>
    </lineage>
</organism>
<name>BDNF_PTYMJ</name>
<accession>Q8QG74</accession>
<reference key="1">
    <citation type="submission" date="2002-04" db="EMBL/GenBank/DDBJ databases">
        <title>Molecular cloning of brain derived neurotrophic factor gene from amphibians and reptiles and its application in the research of phylogeny and taxonomy.</title>
        <authorList>
            <person name="Cao M."/>
            <person name="Yang Y.H."/>
            <person name="Zhang Y.Z."/>
        </authorList>
    </citation>
    <scope>NUCLEOTIDE SEQUENCE [GENOMIC DNA]</scope>
</reference>
<gene>
    <name type="primary">BDNF</name>
</gene>
<proteinExistence type="inferred from homology"/>
<keyword id="KW-0165">Cleavage on pair of basic residues</keyword>
<keyword id="KW-1015">Disulfide bond</keyword>
<keyword id="KW-0325">Glycoprotein</keyword>
<keyword id="KW-0339">Growth factor</keyword>
<keyword id="KW-0964">Secreted</keyword>
<keyword id="KW-0732">Signal</keyword>
<dbReference type="EMBL" id="AF497715">
    <property type="protein sequence ID" value="AAM18716.1"/>
    <property type="molecule type" value="Genomic_DNA"/>
</dbReference>
<dbReference type="SMR" id="Q8QG74"/>
<dbReference type="GlyCosmos" id="Q8QG74">
    <property type="glycosylation" value="1 site, No reported glycans"/>
</dbReference>
<dbReference type="GO" id="GO:0030424">
    <property type="term" value="C:axon"/>
    <property type="evidence" value="ECO:0007669"/>
    <property type="project" value="TreeGrafter"/>
</dbReference>
<dbReference type="GO" id="GO:0030425">
    <property type="term" value="C:dendrite"/>
    <property type="evidence" value="ECO:0007669"/>
    <property type="project" value="TreeGrafter"/>
</dbReference>
<dbReference type="GO" id="GO:0005615">
    <property type="term" value="C:extracellular space"/>
    <property type="evidence" value="ECO:0007669"/>
    <property type="project" value="TreeGrafter"/>
</dbReference>
<dbReference type="GO" id="GO:0008021">
    <property type="term" value="C:synaptic vesicle"/>
    <property type="evidence" value="ECO:0007669"/>
    <property type="project" value="TreeGrafter"/>
</dbReference>
<dbReference type="GO" id="GO:0008083">
    <property type="term" value="F:growth factor activity"/>
    <property type="evidence" value="ECO:0007669"/>
    <property type="project" value="UniProtKB-KW"/>
</dbReference>
<dbReference type="GO" id="GO:0005163">
    <property type="term" value="F:nerve growth factor receptor binding"/>
    <property type="evidence" value="ECO:0007669"/>
    <property type="project" value="TreeGrafter"/>
</dbReference>
<dbReference type="GO" id="GO:0007169">
    <property type="term" value="P:cell surface receptor protein tyrosine kinase signaling pathway"/>
    <property type="evidence" value="ECO:0007669"/>
    <property type="project" value="TreeGrafter"/>
</dbReference>
<dbReference type="GO" id="GO:0050804">
    <property type="term" value="P:modulation of chemical synaptic transmission"/>
    <property type="evidence" value="ECO:0007669"/>
    <property type="project" value="TreeGrafter"/>
</dbReference>
<dbReference type="GO" id="GO:0043524">
    <property type="term" value="P:negative regulation of neuron apoptotic process"/>
    <property type="evidence" value="ECO:0007669"/>
    <property type="project" value="TreeGrafter"/>
</dbReference>
<dbReference type="GO" id="GO:0021675">
    <property type="term" value="P:nerve development"/>
    <property type="evidence" value="ECO:0007669"/>
    <property type="project" value="TreeGrafter"/>
</dbReference>
<dbReference type="GO" id="GO:0038180">
    <property type="term" value="P:nerve growth factor signaling pathway"/>
    <property type="evidence" value="ECO:0007669"/>
    <property type="project" value="TreeGrafter"/>
</dbReference>
<dbReference type="GO" id="GO:0048812">
    <property type="term" value="P:neuron projection morphogenesis"/>
    <property type="evidence" value="ECO:0007669"/>
    <property type="project" value="TreeGrafter"/>
</dbReference>
<dbReference type="FunFam" id="2.10.90.10:FF:000002">
    <property type="entry name" value="Brain-derived neurotrophic factor"/>
    <property type="match status" value="1"/>
</dbReference>
<dbReference type="Gene3D" id="2.10.90.10">
    <property type="entry name" value="Cystine-knot cytokines"/>
    <property type="match status" value="1"/>
</dbReference>
<dbReference type="InterPro" id="IPR020430">
    <property type="entry name" value="Brain-der_neurotrophic_factor"/>
</dbReference>
<dbReference type="InterPro" id="IPR029034">
    <property type="entry name" value="Cystine-knot_cytokine"/>
</dbReference>
<dbReference type="InterPro" id="IPR020408">
    <property type="entry name" value="Nerve_growth_factor-like"/>
</dbReference>
<dbReference type="InterPro" id="IPR002072">
    <property type="entry name" value="Nerve_growth_factor-rel"/>
</dbReference>
<dbReference type="InterPro" id="IPR019846">
    <property type="entry name" value="Nerve_growth_factor_CS"/>
</dbReference>
<dbReference type="PANTHER" id="PTHR11589:SF3">
    <property type="entry name" value="BRAIN-DERIVED NEUROTROPHIC FACTOR"/>
    <property type="match status" value="1"/>
</dbReference>
<dbReference type="PANTHER" id="PTHR11589">
    <property type="entry name" value="NERVE GROWTH FACTOR NGF -RELATED"/>
    <property type="match status" value="1"/>
</dbReference>
<dbReference type="Pfam" id="PF00243">
    <property type="entry name" value="NGF"/>
    <property type="match status" value="1"/>
</dbReference>
<dbReference type="PIRSF" id="PIRSF001789">
    <property type="entry name" value="NGF"/>
    <property type="match status" value="1"/>
</dbReference>
<dbReference type="PRINTS" id="PR01912">
    <property type="entry name" value="BDNFACTOR"/>
</dbReference>
<dbReference type="PRINTS" id="PR00268">
    <property type="entry name" value="NGF"/>
</dbReference>
<dbReference type="SMART" id="SM00140">
    <property type="entry name" value="NGF"/>
    <property type="match status" value="1"/>
</dbReference>
<dbReference type="SUPFAM" id="SSF57501">
    <property type="entry name" value="Cystine-knot cytokines"/>
    <property type="match status" value="1"/>
</dbReference>
<dbReference type="PROSITE" id="PS00248">
    <property type="entry name" value="NGF_1"/>
    <property type="match status" value="1"/>
</dbReference>
<dbReference type="PROSITE" id="PS50270">
    <property type="entry name" value="NGF_2"/>
    <property type="match status" value="1"/>
</dbReference>
<sequence>MTILFLTMVISYLSCMKATPMKEVSIRGQGSLAYPGLRTQGNLETLSGPNDATRGLTSLADTFEHVIEELLDERQVIQPSKENKDADLYSSRVMLSSQVPLEPPLLFLLEEYKNYLDAANMSMRVRRHSDPARRGELSVCDSTSEWVTAAEKKTAVDMSGATVTVLEKVPVPKGQLKQYFYETKCSTKGYAKEGCRGIDKRYWNSQCRTTQSYVRALTTDNKKRVGWRFIRIDTSCVCTLTIKRGR</sequence>
<feature type="signal peptide" evidence="2">
    <location>
        <begin position="1"/>
        <end position="18"/>
    </location>
</feature>
<feature type="propeptide" id="PRO_0000346672" evidence="1">
    <location>
        <begin position="19"/>
        <end position="127"/>
    </location>
</feature>
<feature type="chain" id="PRO_5000063074" description="Neurotrophic factor BDNF">
    <location>
        <begin position="128"/>
        <end position="246"/>
    </location>
</feature>
<feature type="glycosylation site" description="N-linked (GlcNAc...) asparagine" evidence="2">
    <location>
        <position position="120"/>
    </location>
</feature>
<feature type="disulfide bond" evidence="1">
    <location>
        <begin position="140"/>
        <end position="207"/>
    </location>
</feature>
<feature type="disulfide bond" evidence="1">
    <location>
        <begin position="185"/>
        <end position="236"/>
    </location>
</feature>
<feature type="disulfide bond" evidence="1">
    <location>
        <begin position="195"/>
        <end position="238"/>
    </location>
</feature>